<organism>
    <name type="scientific">Frankia alni (strain DSM 45986 / CECT 9034 / ACN14a)</name>
    <dbReference type="NCBI Taxonomy" id="326424"/>
    <lineage>
        <taxon>Bacteria</taxon>
        <taxon>Bacillati</taxon>
        <taxon>Actinomycetota</taxon>
        <taxon>Actinomycetes</taxon>
        <taxon>Frankiales</taxon>
        <taxon>Frankiaceae</taxon>
        <taxon>Frankia</taxon>
    </lineage>
</organism>
<keyword id="KW-0963">Cytoplasm</keyword>
<keyword id="KW-0460">Magnesium</keyword>
<keyword id="KW-0479">Metal-binding</keyword>
<keyword id="KW-0548">Nucleotidyltransferase</keyword>
<keyword id="KW-1185">Reference proteome</keyword>
<keyword id="KW-0694">RNA-binding</keyword>
<keyword id="KW-0808">Transferase</keyword>
<proteinExistence type="inferred from homology"/>
<gene>
    <name evidence="1" type="primary">pnp</name>
    <name type="ordered locus">FRAAL5753</name>
</gene>
<dbReference type="EC" id="2.7.7.8" evidence="1"/>
<dbReference type="EMBL" id="CT573213">
    <property type="protein sequence ID" value="CAJ64385.1"/>
    <property type="molecule type" value="Genomic_DNA"/>
</dbReference>
<dbReference type="RefSeq" id="WP_011606827.1">
    <property type="nucleotide sequence ID" value="NC_008278.1"/>
</dbReference>
<dbReference type="SMR" id="Q0RDT1"/>
<dbReference type="STRING" id="326424.FRAAL5753"/>
<dbReference type="KEGG" id="fal:FRAAL5753"/>
<dbReference type="eggNOG" id="COG1185">
    <property type="taxonomic scope" value="Bacteria"/>
</dbReference>
<dbReference type="HOGENOM" id="CLU_004217_2_2_11"/>
<dbReference type="OrthoDB" id="9804305at2"/>
<dbReference type="Proteomes" id="UP000000657">
    <property type="component" value="Chromosome"/>
</dbReference>
<dbReference type="GO" id="GO:0005829">
    <property type="term" value="C:cytosol"/>
    <property type="evidence" value="ECO:0007669"/>
    <property type="project" value="TreeGrafter"/>
</dbReference>
<dbReference type="GO" id="GO:0000175">
    <property type="term" value="F:3'-5'-RNA exonuclease activity"/>
    <property type="evidence" value="ECO:0007669"/>
    <property type="project" value="TreeGrafter"/>
</dbReference>
<dbReference type="GO" id="GO:0000287">
    <property type="term" value="F:magnesium ion binding"/>
    <property type="evidence" value="ECO:0007669"/>
    <property type="project" value="UniProtKB-UniRule"/>
</dbReference>
<dbReference type="GO" id="GO:0004654">
    <property type="term" value="F:polyribonucleotide nucleotidyltransferase activity"/>
    <property type="evidence" value="ECO:0007669"/>
    <property type="project" value="UniProtKB-UniRule"/>
</dbReference>
<dbReference type="GO" id="GO:0003723">
    <property type="term" value="F:RNA binding"/>
    <property type="evidence" value="ECO:0007669"/>
    <property type="project" value="UniProtKB-UniRule"/>
</dbReference>
<dbReference type="GO" id="GO:0006402">
    <property type="term" value="P:mRNA catabolic process"/>
    <property type="evidence" value="ECO:0007669"/>
    <property type="project" value="UniProtKB-UniRule"/>
</dbReference>
<dbReference type="GO" id="GO:0006396">
    <property type="term" value="P:RNA processing"/>
    <property type="evidence" value="ECO:0007669"/>
    <property type="project" value="InterPro"/>
</dbReference>
<dbReference type="CDD" id="cd02393">
    <property type="entry name" value="KH-I_PNPase"/>
    <property type="match status" value="1"/>
</dbReference>
<dbReference type="CDD" id="cd11364">
    <property type="entry name" value="RNase_PH_PNPase_2"/>
    <property type="match status" value="1"/>
</dbReference>
<dbReference type="CDD" id="cd04472">
    <property type="entry name" value="S1_PNPase"/>
    <property type="match status" value="1"/>
</dbReference>
<dbReference type="FunFam" id="2.40.50.140:FF:000069">
    <property type="entry name" value="Polyribonucleotide nucleotidyltransferase"/>
    <property type="match status" value="1"/>
</dbReference>
<dbReference type="FunFam" id="3.30.1370.10:FF:000001">
    <property type="entry name" value="Polyribonucleotide nucleotidyltransferase"/>
    <property type="match status" value="1"/>
</dbReference>
<dbReference type="FunFam" id="3.30.230.70:FF:000001">
    <property type="entry name" value="Polyribonucleotide nucleotidyltransferase"/>
    <property type="match status" value="1"/>
</dbReference>
<dbReference type="FunFam" id="3.30.230.70:FF:000002">
    <property type="entry name" value="Polyribonucleotide nucleotidyltransferase"/>
    <property type="match status" value="1"/>
</dbReference>
<dbReference type="Gene3D" id="3.30.230.70">
    <property type="entry name" value="GHMP Kinase, N-terminal domain"/>
    <property type="match status" value="2"/>
</dbReference>
<dbReference type="Gene3D" id="3.30.1370.10">
    <property type="entry name" value="K Homology domain, type 1"/>
    <property type="match status" value="1"/>
</dbReference>
<dbReference type="Gene3D" id="2.40.50.140">
    <property type="entry name" value="Nucleic acid-binding proteins"/>
    <property type="match status" value="1"/>
</dbReference>
<dbReference type="HAMAP" id="MF_01595">
    <property type="entry name" value="PNPase"/>
    <property type="match status" value="1"/>
</dbReference>
<dbReference type="InterPro" id="IPR001247">
    <property type="entry name" value="ExoRNase_PH_dom1"/>
</dbReference>
<dbReference type="InterPro" id="IPR036345">
    <property type="entry name" value="ExoRNase_PH_dom2_sf"/>
</dbReference>
<dbReference type="InterPro" id="IPR014069">
    <property type="entry name" value="GPSI/PNP"/>
</dbReference>
<dbReference type="InterPro" id="IPR004087">
    <property type="entry name" value="KH_dom"/>
</dbReference>
<dbReference type="InterPro" id="IPR004088">
    <property type="entry name" value="KH_dom_type_1"/>
</dbReference>
<dbReference type="InterPro" id="IPR036612">
    <property type="entry name" value="KH_dom_type_1_sf"/>
</dbReference>
<dbReference type="InterPro" id="IPR012340">
    <property type="entry name" value="NA-bd_OB-fold"/>
</dbReference>
<dbReference type="InterPro" id="IPR012162">
    <property type="entry name" value="PNPase"/>
</dbReference>
<dbReference type="InterPro" id="IPR027408">
    <property type="entry name" value="PNPase/RNase_PH_dom_sf"/>
</dbReference>
<dbReference type="InterPro" id="IPR015848">
    <property type="entry name" value="PNPase_PH_RNA-bd_bac/org-type"/>
</dbReference>
<dbReference type="InterPro" id="IPR036456">
    <property type="entry name" value="PNPase_PH_RNA-bd_sf"/>
</dbReference>
<dbReference type="InterPro" id="IPR020568">
    <property type="entry name" value="Ribosomal_Su5_D2-typ_SF"/>
</dbReference>
<dbReference type="InterPro" id="IPR003029">
    <property type="entry name" value="S1_domain"/>
</dbReference>
<dbReference type="NCBIfam" id="TIGR03591">
    <property type="entry name" value="polynuc_phos"/>
    <property type="match status" value="1"/>
</dbReference>
<dbReference type="NCBIfam" id="TIGR02696">
    <property type="entry name" value="pppGpp_PNP"/>
    <property type="match status" value="1"/>
</dbReference>
<dbReference type="NCBIfam" id="NF008805">
    <property type="entry name" value="PRK11824.1"/>
    <property type="match status" value="1"/>
</dbReference>
<dbReference type="PANTHER" id="PTHR11252">
    <property type="entry name" value="POLYRIBONUCLEOTIDE NUCLEOTIDYLTRANSFERASE"/>
    <property type="match status" value="1"/>
</dbReference>
<dbReference type="PANTHER" id="PTHR11252:SF0">
    <property type="entry name" value="POLYRIBONUCLEOTIDE NUCLEOTIDYLTRANSFERASE 1, MITOCHONDRIAL"/>
    <property type="match status" value="1"/>
</dbReference>
<dbReference type="Pfam" id="PF00013">
    <property type="entry name" value="KH_1"/>
    <property type="match status" value="1"/>
</dbReference>
<dbReference type="Pfam" id="PF03726">
    <property type="entry name" value="PNPase"/>
    <property type="match status" value="1"/>
</dbReference>
<dbReference type="Pfam" id="PF01138">
    <property type="entry name" value="RNase_PH"/>
    <property type="match status" value="2"/>
</dbReference>
<dbReference type="Pfam" id="PF00575">
    <property type="entry name" value="S1"/>
    <property type="match status" value="1"/>
</dbReference>
<dbReference type="PIRSF" id="PIRSF005499">
    <property type="entry name" value="PNPase"/>
    <property type="match status" value="1"/>
</dbReference>
<dbReference type="SMART" id="SM00322">
    <property type="entry name" value="KH"/>
    <property type="match status" value="1"/>
</dbReference>
<dbReference type="SMART" id="SM00316">
    <property type="entry name" value="S1"/>
    <property type="match status" value="1"/>
</dbReference>
<dbReference type="SUPFAM" id="SSF54791">
    <property type="entry name" value="Eukaryotic type KH-domain (KH-domain type I)"/>
    <property type="match status" value="1"/>
</dbReference>
<dbReference type="SUPFAM" id="SSF50249">
    <property type="entry name" value="Nucleic acid-binding proteins"/>
    <property type="match status" value="1"/>
</dbReference>
<dbReference type="SUPFAM" id="SSF46915">
    <property type="entry name" value="Polynucleotide phosphorylase/guanosine pentaphosphate synthase (PNPase/GPSI), domain 3"/>
    <property type="match status" value="1"/>
</dbReference>
<dbReference type="SUPFAM" id="SSF55666">
    <property type="entry name" value="Ribonuclease PH domain 2-like"/>
    <property type="match status" value="2"/>
</dbReference>
<dbReference type="SUPFAM" id="SSF54211">
    <property type="entry name" value="Ribosomal protein S5 domain 2-like"/>
    <property type="match status" value="2"/>
</dbReference>
<dbReference type="PROSITE" id="PS50084">
    <property type="entry name" value="KH_TYPE_1"/>
    <property type="match status" value="1"/>
</dbReference>
<dbReference type="PROSITE" id="PS50126">
    <property type="entry name" value="S1"/>
    <property type="match status" value="1"/>
</dbReference>
<evidence type="ECO:0000255" key="1">
    <source>
        <dbReference type="HAMAP-Rule" id="MF_01595"/>
    </source>
</evidence>
<feature type="chain" id="PRO_0000329656" description="Polyribonucleotide nucleotidyltransferase">
    <location>
        <begin position="1"/>
        <end position="729"/>
    </location>
</feature>
<feature type="domain" description="KH" evidence="1">
    <location>
        <begin position="576"/>
        <end position="635"/>
    </location>
</feature>
<feature type="domain" description="S1 motif" evidence="1">
    <location>
        <begin position="647"/>
        <end position="719"/>
    </location>
</feature>
<feature type="binding site" evidence="1">
    <location>
        <position position="510"/>
    </location>
    <ligand>
        <name>Mg(2+)</name>
        <dbReference type="ChEBI" id="CHEBI:18420"/>
    </ligand>
</feature>
<feature type="binding site" evidence="1">
    <location>
        <position position="516"/>
    </location>
    <ligand>
        <name>Mg(2+)</name>
        <dbReference type="ChEBI" id="CHEBI:18420"/>
    </ligand>
</feature>
<comment type="function">
    <text evidence="1">Involved in mRNA degradation. Catalyzes the phosphorolysis of single-stranded polyribonucleotides processively in the 3'- to 5'-direction.</text>
</comment>
<comment type="catalytic activity">
    <reaction evidence="1">
        <text>RNA(n+1) + phosphate = RNA(n) + a ribonucleoside 5'-diphosphate</text>
        <dbReference type="Rhea" id="RHEA:22096"/>
        <dbReference type="Rhea" id="RHEA-COMP:14527"/>
        <dbReference type="Rhea" id="RHEA-COMP:17342"/>
        <dbReference type="ChEBI" id="CHEBI:43474"/>
        <dbReference type="ChEBI" id="CHEBI:57930"/>
        <dbReference type="ChEBI" id="CHEBI:140395"/>
        <dbReference type="EC" id="2.7.7.8"/>
    </reaction>
</comment>
<comment type="cofactor">
    <cofactor evidence="1">
        <name>Mg(2+)</name>
        <dbReference type="ChEBI" id="CHEBI:18420"/>
    </cofactor>
</comment>
<comment type="subcellular location">
    <subcellularLocation>
        <location evidence="1">Cytoplasm</location>
    </subcellularLocation>
</comment>
<comment type="similarity">
    <text evidence="1">Belongs to the polyribonucleotide nucleotidyltransferase family.</text>
</comment>
<name>PNP_FRAAA</name>
<reference key="1">
    <citation type="journal article" date="2007" name="Genome Res.">
        <title>Genome characteristics of facultatively symbiotic Frankia sp. strains reflect host range and host plant biogeography.</title>
        <authorList>
            <person name="Normand P."/>
            <person name="Lapierre P."/>
            <person name="Tisa L.S."/>
            <person name="Gogarten J.P."/>
            <person name="Alloisio N."/>
            <person name="Bagnarol E."/>
            <person name="Bassi C.A."/>
            <person name="Berry A.M."/>
            <person name="Bickhart D.M."/>
            <person name="Choisne N."/>
            <person name="Couloux A."/>
            <person name="Cournoyer B."/>
            <person name="Cruveiller S."/>
            <person name="Daubin V."/>
            <person name="Demange N."/>
            <person name="Francino M.P."/>
            <person name="Goltsman E."/>
            <person name="Huang Y."/>
            <person name="Kopp O.R."/>
            <person name="Labarre L."/>
            <person name="Lapidus A."/>
            <person name="Lavire C."/>
            <person name="Marechal J."/>
            <person name="Martinez M."/>
            <person name="Mastronunzio J.E."/>
            <person name="Mullin B.C."/>
            <person name="Niemann J."/>
            <person name="Pujic P."/>
            <person name="Rawnsley T."/>
            <person name="Rouy Z."/>
            <person name="Schenowitz C."/>
            <person name="Sellstedt A."/>
            <person name="Tavares F."/>
            <person name="Tomkins J.P."/>
            <person name="Vallenet D."/>
            <person name="Valverde C."/>
            <person name="Wall L.G."/>
            <person name="Wang Y."/>
            <person name="Medigue C."/>
            <person name="Benson D.R."/>
        </authorList>
    </citation>
    <scope>NUCLEOTIDE SEQUENCE [LARGE SCALE GENOMIC DNA]</scope>
    <source>
        <strain>DSM 45986 / CECT 9034 / ACN14a</strain>
    </source>
</reference>
<protein>
    <recommendedName>
        <fullName evidence="1">Polyribonucleotide nucleotidyltransferase</fullName>
        <ecNumber evidence="1">2.7.7.8</ecNumber>
    </recommendedName>
    <alternativeName>
        <fullName evidence="1">Polynucleotide phosphorylase</fullName>
        <shortName evidence="1">PNPase</shortName>
    </alternativeName>
</protein>
<accession>Q0RDT1</accession>
<sequence>MDDSTHAAEAVIATPAGNRTVRFETGRLARQAAGSAVAYLGDTMVLSATTVSKQPKEQLDFFPLTVDVEERMYAAGRIPGSFFRREGRPSEDAILTCRLIDRPLRPSFAKGLRNEIQVVATVLALDPDTLYDVVAINAASASTTLSGLPFTGPIGATRVGYVDGEWIAFPTHAELARATFDMVVAGRVVEDGSDVAIMMVEAEATPGTVELIAGGAPAPTEEVVAAGLEAAKPAIRELCRAQSELASLAGKAATREFPVFIDHHDDVLEALSAAVGDELSAALRIAGKSERENELDRVRQLAAEKVAAQFEGREKEIGAAYRALTKKLVRSRIVTEGVRIDGRSTTEIRELSAEVDYIPRVHGSALFERGETQILGVTTLAMLRMEQTVDTLNPDRTKRYMHNYNFPPYSTGETGRVGSPKRREIGHGALAERALLPVLPSREEFPYAIRQVSEALGSNGSTSMGSVCASTLSLLNAGVPLKAPVAGIAMGLVHADDAYVTLTDILGAEDAYGDMDFKVAGTRDFVTALQLDTKLDGIPASVLASALQQARGARLAILDVMAEAIGSPDEMSAHAPRVISVKIPVDKIGEVIGPKGKMINQIQADSGAEITVEDDGTIYIGAADGTSAETARSAINAIANPQMPEVGERYLGTIVKITNFGAFVSLTPGRDGLLHVSKLKTLSGGKRVEKVEDVLTVGQKLQVEITEIDARGKISLSPSAEAADAAAAS</sequence>